<keyword id="KW-0067">ATP-binding</keyword>
<keyword id="KW-0131">Cell cycle</keyword>
<keyword id="KW-0132">Cell division</keyword>
<keyword id="KW-0133">Cell shape</keyword>
<keyword id="KW-0961">Cell wall biogenesis/degradation</keyword>
<keyword id="KW-0963">Cytoplasm</keyword>
<keyword id="KW-0436">Ligase</keyword>
<keyword id="KW-0547">Nucleotide-binding</keyword>
<keyword id="KW-0573">Peptidoglycan synthesis</keyword>
<keyword id="KW-1185">Reference proteome</keyword>
<accession>P57315</accession>
<proteinExistence type="inferred from homology"/>
<evidence type="ECO:0000255" key="1">
    <source>
        <dbReference type="HAMAP-Rule" id="MF_02019"/>
    </source>
</evidence>
<organism>
    <name type="scientific">Buchnera aphidicola subsp. Acyrthosiphon pisum (strain APS)</name>
    <name type="common">Acyrthosiphon pisum symbiotic bacterium</name>
    <dbReference type="NCBI Taxonomy" id="107806"/>
    <lineage>
        <taxon>Bacteria</taxon>
        <taxon>Pseudomonadati</taxon>
        <taxon>Pseudomonadota</taxon>
        <taxon>Gammaproteobacteria</taxon>
        <taxon>Enterobacterales</taxon>
        <taxon>Erwiniaceae</taxon>
        <taxon>Buchnera</taxon>
    </lineage>
</organism>
<dbReference type="EC" id="6.3.2.10" evidence="1"/>
<dbReference type="EMBL" id="BA000003">
    <property type="protein sequence ID" value="BAB12936.1"/>
    <property type="molecule type" value="Genomic_DNA"/>
</dbReference>
<dbReference type="RefSeq" id="NP_240050.1">
    <property type="nucleotide sequence ID" value="NC_002528.1"/>
</dbReference>
<dbReference type="RefSeq" id="WP_010896011.1">
    <property type="nucleotide sequence ID" value="NC_002528.1"/>
</dbReference>
<dbReference type="SMR" id="P57315"/>
<dbReference type="STRING" id="563178.BUAP5A_216"/>
<dbReference type="EnsemblBacteria" id="BAB12936">
    <property type="protein sequence ID" value="BAB12936"/>
    <property type="gene ID" value="BAB12936"/>
</dbReference>
<dbReference type="KEGG" id="buc:BU220"/>
<dbReference type="PATRIC" id="fig|107806.10.peg.233"/>
<dbReference type="eggNOG" id="COG0770">
    <property type="taxonomic scope" value="Bacteria"/>
</dbReference>
<dbReference type="HOGENOM" id="CLU_031507_4_0_6"/>
<dbReference type="UniPathway" id="UPA00219"/>
<dbReference type="Proteomes" id="UP000001806">
    <property type="component" value="Chromosome"/>
</dbReference>
<dbReference type="GO" id="GO:0005737">
    <property type="term" value="C:cytoplasm"/>
    <property type="evidence" value="ECO:0007669"/>
    <property type="project" value="UniProtKB-SubCell"/>
</dbReference>
<dbReference type="GO" id="GO:0005524">
    <property type="term" value="F:ATP binding"/>
    <property type="evidence" value="ECO:0007669"/>
    <property type="project" value="UniProtKB-UniRule"/>
</dbReference>
<dbReference type="GO" id="GO:0047480">
    <property type="term" value="F:UDP-N-acetylmuramoyl-tripeptide-D-alanyl-D-alanine ligase activity"/>
    <property type="evidence" value="ECO:0007669"/>
    <property type="project" value="UniProtKB-UniRule"/>
</dbReference>
<dbReference type="GO" id="GO:0008766">
    <property type="term" value="F:UDP-N-acetylmuramoylalanyl-D-glutamyl-2,6-diaminopimelate-D-alanyl-D-alanine ligase activity"/>
    <property type="evidence" value="ECO:0007669"/>
    <property type="project" value="RHEA"/>
</dbReference>
<dbReference type="GO" id="GO:0051301">
    <property type="term" value="P:cell division"/>
    <property type="evidence" value="ECO:0007669"/>
    <property type="project" value="UniProtKB-KW"/>
</dbReference>
<dbReference type="GO" id="GO:0071555">
    <property type="term" value="P:cell wall organization"/>
    <property type="evidence" value="ECO:0007669"/>
    <property type="project" value="UniProtKB-KW"/>
</dbReference>
<dbReference type="GO" id="GO:0009252">
    <property type="term" value="P:peptidoglycan biosynthetic process"/>
    <property type="evidence" value="ECO:0007669"/>
    <property type="project" value="UniProtKB-UniRule"/>
</dbReference>
<dbReference type="GO" id="GO:0008360">
    <property type="term" value="P:regulation of cell shape"/>
    <property type="evidence" value="ECO:0007669"/>
    <property type="project" value="UniProtKB-KW"/>
</dbReference>
<dbReference type="Gene3D" id="3.90.190.20">
    <property type="entry name" value="Mur ligase, C-terminal domain"/>
    <property type="match status" value="1"/>
</dbReference>
<dbReference type="Gene3D" id="3.40.1190.10">
    <property type="entry name" value="Mur-like, catalytic domain"/>
    <property type="match status" value="1"/>
</dbReference>
<dbReference type="Gene3D" id="3.40.1390.10">
    <property type="entry name" value="MurE/MurF, N-terminal domain"/>
    <property type="match status" value="1"/>
</dbReference>
<dbReference type="HAMAP" id="MF_02019">
    <property type="entry name" value="MurF"/>
    <property type="match status" value="1"/>
</dbReference>
<dbReference type="InterPro" id="IPR036565">
    <property type="entry name" value="Mur-like_cat_sf"/>
</dbReference>
<dbReference type="InterPro" id="IPR004101">
    <property type="entry name" value="Mur_ligase_C"/>
</dbReference>
<dbReference type="InterPro" id="IPR036615">
    <property type="entry name" value="Mur_ligase_C_dom_sf"/>
</dbReference>
<dbReference type="InterPro" id="IPR013221">
    <property type="entry name" value="Mur_ligase_cen"/>
</dbReference>
<dbReference type="InterPro" id="IPR051046">
    <property type="entry name" value="MurCDEF_CellWall_CoF430Synth"/>
</dbReference>
<dbReference type="InterPro" id="IPR035911">
    <property type="entry name" value="MurE/MurF_N"/>
</dbReference>
<dbReference type="InterPro" id="IPR005863">
    <property type="entry name" value="UDP-N-AcMur_synth"/>
</dbReference>
<dbReference type="NCBIfam" id="TIGR01143">
    <property type="entry name" value="murF"/>
    <property type="match status" value="1"/>
</dbReference>
<dbReference type="NCBIfam" id="NF008041">
    <property type="entry name" value="PRK10773.1"/>
    <property type="match status" value="1"/>
</dbReference>
<dbReference type="PANTHER" id="PTHR43024">
    <property type="entry name" value="UDP-N-ACETYLMURAMOYL-TRIPEPTIDE--D-ALANYL-D-ALANINE LIGASE"/>
    <property type="match status" value="1"/>
</dbReference>
<dbReference type="PANTHER" id="PTHR43024:SF1">
    <property type="entry name" value="UDP-N-ACETYLMURAMOYL-TRIPEPTIDE--D-ALANYL-D-ALANINE LIGASE"/>
    <property type="match status" value="1"/>
</dbReference>
<dbReference type="Pfam" id="PF02875">
    <property type="entry name" value="Mur_ligase_C"/>
    <property type="match status" value="1"/>
</dbReference>
<dbReference type="Pfam" id="PF08245">
    <property type="entry name" value="Mur_ligase_M"/>
    <property type="match status" value="1"/>
</dbReference>
<dbReference type="SUPFAM" id="SSF53623">
    <property type="entry name" value="MurD-like peptide ligases, catalytic domain"/>
    <property type="match status" value="1"/>
</dbReference>
<dbReference type="SUPFAM" id="SSF53244">
    <property type="entry name" value="MurD-like peptide ligases, peptide-binding domain"/>
    <property type="match status" value="1"/>
</dbReference>
<dbReference type="SUPFAM" id="SSF63418">
    <property type="entry name" value="MurE/MurF N-terminal domain"/>
    <property type="match status" value="1"/>
</dbReference>
<feature type="chain" id="PRO_0000101696" description="UDP-N-acetylmuramoyl-tripeptide--D-alanyl-D-alanine ligase">
    <location>
        <begin position="1"/>
        <end position="455"/>
    </location>
</feature>
<feature type="binding site" evidence="1">
    <location>
        <begin position="107"/>
        <end position="113"/>
    </location>
    <ligand>
        <name>ATP</name>
        <dbReference type="ChEBI" id="CHEBI:30616"/>
    </ligand>
</feature>
<protein>
    <recommendedName>
        <fullName evidence="1">UDP-N-acetylmuramoyl-tripeptide--D-alanyl-D-alanine ligase</fullName>
        <ecNumber evidence="1">6.3.2.10</ecNumber>
    </recommendedName>
    <alternativeName>
        <fullName evidence="1">D-alanyl-D-alanine-adding enzyme</fullName>
    </alternativeName>
    <alternativeName>
        <fullName>UDP-MurNAc-pentapeptide synthetase</fullName>
    </alternativeName>
</protein>
<sequence>MISLSLKKIALITNGTLYGADLLINEIVIDTKKIIPGCLFIALIGRKFDAHIFIHDALKKKCAAFVTQKNIKPHVPYIIVENTSIALGQIAGWVRKKTKAKILAITGSCGKTSVKEMTASILRKNGNTISTIDNLNNNIGVPMTLLQLKQEHKYGVIELGASKPGEIAYTSNISQPDIILINNIHCAHLQGFKSLLGVSKAKSEIFSGLKPNSTVIINLDSHHFSQWKKDIKNSNILFFSIKKKKYSNFFCSNIKIHIHGTSFTMHTPCGKINISLPFLGYQNISNALAASAFSFALKIPLKKIKIGLLDTPIVSKRLESIILEPNKILIDDTYNSNVSSMISAIKVLERMPGYKILVTGDMAELGENSMMYHQMIGNTANSSAINKIFSIGDMSSEITKIFNNGKHFLNKKKLSEYLKNVFLKKKKITILVKGSRSTKMEKVVEDLIKESKKKC</sequence>
<reference key="1">
    <citation type="journal article" date="2000" name="Nature">
        <title>Genome sequence of the endocellular bacterial symbiont of aphids Buchnera sp. APS.</title>
        <authorList>
            <person name="Shigenobu S."/>
            <person name="Watanabe H."/>
            <person name="Hattori M."/>
            <person name="Sakaki Y."/>
            <person name="Ishikawa H."/>
        </authorList>
    </citation>
    <scope>NUCLEOTIDE SEQUENCE [LARGE SCALE GENOMIC DNA]</scope>
    <source>
        <strain>APS</strain>
    </source>
</reference>
<comment type="function">
    <text evidence="1">Involved in cell wall formation. Catalyzes the final step in the synthesis of UDP-N-acetylmuramoyl-pentapeptide, the precursor of murein.</text>
</comment>
<comment type="catalytic activity">
    <reaction evidence="1">
        <text>D-alanyl-D-alanine + UDP-N-acetyl-alpha-D-muramoyl-L-alanyl-gamma-D-glutamyl-meso-2,6-diaminopimelate + ATP = UDP-N-acetyl-alpha-D-muramoyl-L-alanyl-gamma-D-glutamyl-meso-2,6-diaminopimeloyl-D-alanyl-D-alanine + ADP + phosphate + H(+)</text>
        <dbReference type="Rhea" id="RHEA:28374"/>
        <dbReference type="ChEBI" id="CHEBI:15378"/>
        <dbReference type="ChEBI" id="CHEBI:30616"/>
        <dbReference type="ChEBI" id="CHEBI:43474"/>
        <dbReference type="ChEBI" id="CHEBI:57822"/>
        <dbReference type="ChEBI" id="CHEBI:61386"/>
        <dbReference type="ChEBI" id="CHEBI:83905"/>
        <dbReference type="ChEBI" id="CHEBI:456216"/>
        <dbReference type="EC" id="6.3.2.10"/>
    </reaction>
</comment>
<comment type="pathway">
    <text evidence="1">Cell wall biogenesis; peptidoglycan biosynthesis.</text>
</comment>
<comment type="subcellular location">
    <subcellularLocation>
        <location evidence="1">Cytoplasm</location>
    </subcellularLocation>
</comment>
<comment type="similarity">
    <text evidence="1">Belongs to the MurCDEF family. MurF subfamily.</text>
</comment>
<gene>
    <name evidence="1" type="primary">murF</name>
    <name type="ordered locus">BU220</name>
</gene>
<name>MURF_BUCAI</name>